<sequence>MPIQVLPPQLANQIAAGEVVERPASVVKELVENSLDAGATRIDIDIERGGAKLIRIRDNGSGIGKDDLALALARHATSKISTLDDLEAIVSLGFRGEALASISSVSRLTLTSRTAEQNEAWQAYAEGRDQAVTVKPAAHPIGSTLEVLDLFYNTPARRKFMRTEKTEFGHIDEVVRRIALARFDVAINLSHNGKLMRQYRAAKDESQYERRLGSICGPAFLQHALNISWQHGDLTIRGWVADPAGARQLGEMQYCYVNSRMMRDRLINHAIRQAYQDQLKDDQQPAYVLYLEVDPHQVDVNVHPAKHEVRFHQARLVHDFIYQAVTTVLQQVGNAPLPLTDETEQQPTPVWQPENRVAAGGNHFSQPAPRRETASTEPAVARERAPQPAYHSGSGYQKREGELYGKLLQATPVAEPRQEAPKQPLFPPVKTEQETPLAGSQHSFGRVLMIYPPCYALIENGQQLMLLNLPVAERWLRQAQLNPSQEGLRPQPLLIPIKLTLNKQEAAACIHHQPLLVTMGLDLQVDHGRVTLRAVPLPLRQQNLQKLIPELLGYLAEHQEMSPAVLATWFARHLGSEHEQWNTSQAIQLLTDVERLCPQLVKSPPSGLLQPVDLQAALTALRHD</sequence>
<accession>A8G8U7</accession>
<proteinExistence type="inferred from homology"/>
<feature type="chain" id="PRO_1000058149" description="DNA mismatch repair protein MutL">
    <location>
        <begin position="1"/>
        <end position="624"/>
    </location>
</feature>
<feature type="region of interest" description="Disordered" evidence="2">
    <location>
        <begin position="360"/>
        <end position="396"/>
    </location>
</feature>
<feature type="compositionally biased region" description="Basic and acidic residues" evidence="2">
    <location>
        <begin position="369"/>
        <end position="385"/>
    </location>
</feature>
<dbReference type="EMBL" id="CP000826">
    <property type="protein sequence ID" value="ABV39537.1"/>
    <property type="molecule type" value="Genomic_DNA"/>
</dbReference>
<dbReference type="SMR" id="A8G8U7"/>
<dbReference type="STRING" id="399741.Spro_0429"/>
<dbReference type="KEGG" id="spe:Spro_0429"/>
<dbReference type="eggNOG" id="COG0323">
    <property type="taxonomic scope" value="Bacteria"/>
</dbReference>
<dbReference type="HOGENOM" id="CLU_004131_5_1_6"/>
<dbReference type="OrthoDB" id="9763467at2"/>
<dbReference type="GO" id="GO:0032300">
    <property type="term" value="C:mismatch repair complex"/>
    <property type="evidence" value="ECO:0007669"/>
    <property type="project" value="InterPro"/>
</dbReference>
<dbReference type="GO" id="GO:0005524">
    <property type="term" value="F:ATP binding"/>
    <property type="evidence" value="ECO:0007669"/>
    <property type="project" value="InterPro"/>
</dbReference>
<dbReference type="GO" id="GO:0016887">
    <property type="term" value="F:ATP hydrolysis activity"/>
    <property type="evidence" value="ECO:0007669"/>
    <property type="project" value="InterPro"/>
</dbReference>
<dbReference type="GO" id="GO:0140664">
    <property type="term" value="F:ATP-dependent DNA damage sensor activity"/>
    <property type="evidence" value="ECO:0007669"/>
    <property type="project" value="InterPro"/>
</dbReference>
<dbReference type="GO" id="GO:0030983">
    <property type="term" value="F:mismatched DNA binding"/>
    <property type="evidence" value="ECO:0007669"/>
    <property type="project" value="InterPro"/>
</dbReference>
<dbReference type="GO" id="GO:0006298">
    <property type="term" value="P:mismatch repair"/>
    <property type="evidence" value="ECO:0007669"/>
    <property type="project" value="UniProtKB-UniRule"/>
</dbReference>
<dbReference type="CDD" id="cd16926">
    <property type="entry name" value="HATPase_MutL-MLH-PMS-like"/>
    <property type="match status" value="1"/>
</dbReference>
<dbReference type="CDD" id="cd03482">
    <property type="entry name" value="MutL_Trans_MutL"/>
    <property type="match status" value="1"/>
</dbReference>
<dbReference type="FunFam" id="3.30.230.10:FF:000013">
    <property type="entry name" value="DNA mismatch repair endonuclease MutL"/>
    <property type="match status" value="1"/>
</dbReference>
<dbReference type="FunFam" id="3.30.565.10:FF:000003">
    <property type="entry name" value="DNA mismatch repair endonuclease MutL"/>
    <property type="match status" value="1"/>
</dbReference>
<dbReference type="Gene3D" id="3.30.230.10">
    <property type="match status" value="1"/>
</dbReference>
<dbReference type="Gene3D" id="3.30.565.10">
    <property type="entry name" value="Histidine kinase-like ATPase, C-terminal domain"/>
    <property type="match status" value="1"/>
</dbReference>
<dbReference type="Gene3D" id="3.30.1540.20">
    <property type="entry name" value="MutL, C-terminal domain, dimerisation subdomain"/>
    <property type="match status" value="1"/>
</dbReference>
<dbReference type="Gene3D" id="3.30.1370.100">
    <property type="entry name" value="MutL, C-terminal domain, regulatory subdomain"/>
    <property type="match status" value="1"/>
</dbReference>
<dbReference type="HAMAP" id="MF_00149">
    <property type="entry name" value="DNA_mis_repair"/>
    <property type="match status" value="1"/>
</dbReference>
<dbReference type="InterPro" id="IPR014762">
    <property type="entry name" value="DNA_mismatch_repair_CS"/>
</dbReference>
<dbReference type="InterPro" id="IPR020667">
    <property type="entry name" value="DNA_mismatch_repair_MutL"/>
</dbReference>
<dbReference type="InterPro" id="IPR013507">
    <property type="entry name" value="DNA_mismatch_S5_2-like"/>
</dbReference>
<dbReference type="InterPro" id="IPR036890">
    <property type="entry name" value="HATPase_C_sf"/>
</dbReference>
<dbReference type="InterPro" id="IPR002099">
    <property type="entry name" value="MutL/Mlh/PMS"/>
</dbReference>
<dbReference type="InterPro" id="IPR038973">
    <property type="entry name" value="MutL/Mlh/Pms-like"/>
</dbReference>
<dbReference type="InterPro" id="IPR014790">
    <property type="entry name" value="MutL_C"/>
</dbReference>
<dbReference type="InterPro" id="IPR042120">
    <property type="entry name" value="MutL_C_dimsub"/>
</dbReference>
<dbReference type="InterPro" id="IPR042121">
    <property type="entry name" value="MutL_C_regsub"/>
</dbReference>
<dbReference type="InterPro" id="IPR037198">
    <property type="entry name" value="MutL_C_sf"/>
</dbReference>
<dbReference type="InterPro" id="IPR020568">
    <property type="entry name" value="Ribosomal_Su5_D2-typ_SF"/>
</dbReference>
<dbReference type="InterPro" id="IPR014721">
    <property type="entry name" value="Ribsml_uS5_D2-typ_fold_subgr"/>
</dbReference>
<dbReference type="NCBIfam" id="TIGR00585">
    <property type="entry name" value="mutl"/>
    <property type="match status" value="1"/>
</dbReference>
<dbReference type="NCBIfam" id="NF000948">
    <property type="entry name" value="PRK00095.1-1"/>
    <property type="match status" value="1"/>
</dbReference>
<dbReference type="PANTHER" id="PTHR10073">
    <property type="entry name" value="DNA MISMATCH REPAIR PROTEIN MLH, PMS, MUTL"/>
    <property type="match status" value="1"/>
</dbReference>
<dbReference type="PANTHER" id="PTHR10073:SF12">
    <property type="entry name" value="DNA MISMATCH REPAIR PROTEIN MLH1"/>
    <property type="match status" value="1"/>
</dbReference>
<dbReference type="Pfam" id="PF01119">
    <property type="entry name" value="DNA_mis_repair"/>
    <property type="match status" value="1"/>
</dbReference>
<dbReference type="Pfam" id="PF13589">
    <property type="entry name" value="HATPase_c_3"/>
    <property type="match status" value="1"/>
</dbReference>
<dbReference type="Pfam" id="PF08676">
    <property type="entry name" value="MutL_C"/>
    <property type="match status" value="1"/>
</dbReference>
<dbReference type="SMART" id="SM01340">
    <property type="entry name" value="DNA_mis_repair"/>
    <property type="match status" value="1"/>
</dbReference>
<dbReference type="SMART" id="SM00853">
    <property type="entry name" value="MutL_C"/>
    <property type="match status" value="1"/>
</dbReference>
<dbReference type="SUPFAM" id="SSF55874">
    <property type="entry name" value="ATPase domain of HSP90 chaperone/DNA topoisomerase II/histidine kinase"/>
    <property type="match status" value="1"/>
</dbReference>
<dbReference type="SUPFAM" id="SSF118116">
    <property type="entry name" value="DNA mismatch repair protein MutL"/>
    <property type="match status" value="1"/>
</dbReference>
<dbReference type="SUPFAM" id="SSF54211">
    <property type="entry name" value="Ribosomal protein S5 domain 2-like"/>
    <property type="match status" value="1"/>
</dbReference>
<dbReference type="PROSITE" id="PS00058">
    <property type="entry name" value="DNA_MISMATCH_REPAIR_1"/>
    <property type="match status" value="1"/>
</dbReference>
<keyword id="KW-0227">DNA damage</keyword>
<keyword id="KW-0234">DNA repair</keyword>
<protein>
    <recommendedName>
        <fullName evidence="1">DNA mismatch repair protein MutL</fullName>
    </recommendedName>
</protein>
<comment type="function">
    <text evidence="1">This protein is involved in the repair of mismatches in DNA. It is required for dam-dependent methyl-directed DNA mismatch repair. May act as a 'molecular matchmaker', a protein that promotes the formation of a stable complex between two or more DNA-binding proteins in an ATP-dependent manner without itself being part of a final effector complex.</text>
</comment>
<comment type="similarity">
    <text evidence="1">Belongs to the DNA mismatch repair MutL/HexB family.</text>
</comment>
<evidence type="ECO:0000255" key="1">
    <source>
        <dbReference type="HAMAP-Rule" id="MF_00149"/>
    </source>
</evidence>
<evidence type="ECO:0000256" key="2">
    <source>
        <dbReference type="SAM" id="MobiDB-lite"/>
    </source>
</evidence>
<name>MUTL_SERP5</name>
<reference key="1">
    <citation type="submission" date="2007-09" db="EMBL/GenBank/DDBJ databases">
        <title>Complete sequence of chromosome of Serratia proteamaculans 568.</title>
        <authorList>
            <consortium name="US DOE Joint Genome Institute"/>
            <person name="Copeland A."/>
            <person name="Lucas S."/>
            <person name="Lapidus A."/>
            <person name="Barry K."/>
            <person name="Glavina del Rio T."/>
            <person name="Dalin E."/>
            <person name="Tice H."/>
            <person name="Pitluck S."/>
            <person name="Chain P."/>
            <person name="Malfatti S."/>
            <person name="Shin M."/>
            <person name="Vergez L."/>
            <person name="Schmutz J."/>
            <person name="Larimer F."/>
            <person name="Land M."/>
            <person name="Hauser L."/>
            <person name="Kyrpides N."/>
            <person name="Kim E."/>
            <person name="Taghavi S."/>
            <person name="Newman L."/>
            <person name="Vangronsveld J."/>
            <person name="van der Lelie D."/>
            <person name="Richardson P."/>
        </authorList>
    </citation>
    <scope>NUCLEOTIDE SEQUENCE [LARGE SCALE GENOMIC DNA]</scope>
    <source>
        <strain>568</strain>
    </source>
</reference>
<gene>
    <name evidence="1" type="primary">mutL</name>
    <name type="ordered locus">Spro_0429</name>
</gene>
<organism>
    <name type="scientific">Serratia proteamaculans (strain 568)</name>
    <dbReference type="NCBI Taxonomy" id="399741"/>
    <lineage>
        <taxon>Bacteria</taxon>
        <taxon>Pseudomonadati</taxon>
        <taxon>Pseudomonadota</taxon>
        <taxon>Gammaproteobacteria</taxon>
        <taxon>Enterobacterales</taxon>
        <taxon>Yersiniaceae</taxon>
        <taxon>Serratia</taxon>
    </lineage>
</organism>